<proteinExistence type="inferred from homology"/>
<sequence>MTKADTIFKENITKIMEEGVWSEQARPKYKDGTTANSKYITGSFAEYDLSKGEFPITTLRPIAIKSAIKEVFWIYQDQTNSLDVLEDKYNVHYWNDWEVEGVPANNGDKRSIGQRYGAVVKKHDIINRLLAQLEANPWNRRNVISLWDYEAFEETAGLQPCAFQTMFDVRRVGEDVYLDATLTQRSNDMLVAHHINAMQYVALQMMIAKHFGWKIGKFFYFINNLHIYDNQFEQAEELLKRQPSDCQPRLVLNVPDETNFFDIKPEDFELVDYDPVKPQLKFDLAI</sequence>
<feature type="chain" id="PRO_0000141036" description="Thymidylate synthase">
    <location>
        <begin position="1"/>
        <end position="286"/>
    </location>
</feature>
<feature type="active site" description="Nucleophile" evidence="1">
    <location>
        <position position="161"/>
    </location>
</feature>
<feature type="binding site" evidence="1">
    <location>
        <begin position="140"/>
        <end position="141"/>
    </location>
    <ligand>
        <name>dUMP</name>
        <dbReference type="ChEBI" id="CHEBI:246422"/>
        <note>ligand shared between dimeric partners</note>
    </ligand>
</feature>
<feature type="binding site" description="in other chain" evidence="1">
    <location>
        <begin position="185"/>
        <end position="188"/>
    </location>
    <ligand>
        <name>dUMP</name>
        <dbReference type="ChEBI" id="CHEBI:246422"/>
        <note>ligand shared between dimeric partners</note>
    </ligand>
</feature>
<feature type="binding site" evidence="1">
    <location>
        <position position="188"/>
    </location>
    <ligand>
        <name>(6R)-5,10-methylene-5,6,7,8-tetrahydrofolate</name>
        <dbReference type="ChEBI" id="CHEBI:15636"/>
    </ligand>
</feature>
<feature type="binding site" description="in other chain" evidence="1">
    <location>
        <position position="196"/>
    </location>
    <ligand>
        <name>dUMP</name>
        <dbReference type="ChEBI" id="CHEBI:246422"/>
        <note>ligand shared between dimeric partners</note>
    </ligand>
</feature>
<feature type="binding site" description="in other chain" evidence="1">
    <location>
        <begin position="226"/>
        <end position="228"/>
    </location>
    <ligand>
        <name>dUMP</name>
        <dbReference type="ChEBI" id="CHEBI:246422"/>
        <note>ligand shared between dimeric partners</note>
    </ligand>
</feature>
<feature type="binding site" evidence="1">
    <location>
        <position position="285"/>
    </location>
    <ligand>
        <name>(6R)-5,10-methylene-5,6,7,8-tetrahydrofolate</name>
        <dbReference type="ChEBI" id="CHEBI:15636"/>
    </ligand>
</feature>
<keyword id="KW-0963">Cytoplasm</keyword>
<keyword id="KW-0489">Methyltransferase</keyword>
<keyword id="KW-0545">Nucleotide biosynthesis</keyword>
<keyword id="KW-0808">Transferase</keyword>
<comment type="function">
    <text evidence="1">Catalyzes the reductive methylation of 2'-deoxyuridine-5'-monophosphate (dUMP) to 2'-deoxythymidine-5'-monophosphate (dTMP) while utilizing 5,10-methylenetetrahydrofolate (mTHF) as the methyl donor and reductant in the reaction, yielding dihydrofolate (DHF) as a by-product. This enzymatic reaction provides an intracellular de novo source of dTMP, an essential precursor for DNA biosynthesis.</text>
</comment>
<comment type="catalytic activity">
    <reaction evidence="1">
        <text>dUMP + (6R)-5,10-methylene-5,6,7,8-tetrahydrofolate = 7,8-dihydrofolate + dTMP</text>
        <dbReference type="Rhea" id="RHEA:12104"/>
        <dbReference type="ChEBI" id="CHEBI:15636"/>
        <dbReference type="ChEBI" id="CHEBI:57451"/>
        <dbReference type="ChEBI" id="CHEBI:63528"/>
        <dbReference type="ChEBI" id="CHEBI:246422"/>
        <dbReference type="EC" id="2.1.1.45"/>
    </reaction>
</comment>
<comment type="pathway">
    <text evidence="1">Pyrimidine metabolism; dTTP biosynthesis.</text>
</comment>
<comment type="subunit">
    <text evidence="1">Homodimer.</text>
</comment>
<comment type="subcellular location">
    <subcellularLocation>
        <location evidence="1">Cytoplasm</location>
    </subcellularLocation>
</comment>
<comment type="similarity">
    <text evidence="1">Belongs to the thymidylate synthase family. Bacterial-type ThyA subfamily.</text>
</comment>
<accession>Q5M0S7</accession>
<evidence type="ECO:0000255" key="1">
    <source>
        <dbReference type="HAMAP-Rule" id="MF_00008"/>
    </source>
</evidence>
<gene>
    <name evidence="1" type="primary">thyA</name>
    <name type="ordered locus">str0578</name>
</gene>
<protein>
    <recommendedName>
        <fullName evidence="1">Thymidylate synthase</fullName>
        <shortName evidence="1">TS</shortName>
        <shortName evidence="1">TSase</shortName>
        <ecNumber evidence="1">2.1.1.45</ecNumber>
    </recommendedName>
</protein>
<reference key="1">
    <citation type="journal article" date="2004" name="Nat. Biotechnol.">
        <title>Complete sequence and comparative genome analysis of the dairy bacterium Streptococcus thermophilus.</title>
        <authorList>
            <person name="Bolotin A."/>
            <person name="Quinquis B."/>
            <person name="Renault P."/>
            <person name="Sorokin A."/>
            <person name="Ehrlich S.D."/>
            <person name="Kulakauskas S."/>
            <person name="Lapidus A."/>
            <person name="Goltsman E."/>
            <person name="Mazur M."/>
            <person name="Pusch G.D."/>
            <person name="Fonstein M."/>
            <person name="Overbeek R."/>
            <person name="Kyprides N."/>
            <person name="Purnelle B."/>
            <person name="Prozzi D."/>
            <person name="Ngui K."/>
            <person name="Masuy D."/>
            <person name="Hancy F."/>
            <person name="Burteau S."/>
            <person name="Boutry M."/>
            <person name="Delcour J."/>
            <person name="Goffeau A."/>
            <person name="Hols P."/>
        </authorList>
    </citation>
    <scope>NUCLEOTIDE SEQUENCE [LARGE SCALE GENOMIC DNA]</scope>
    <source>
        <strain>CNRZ 1066</strain>
    </source>
</reference>
<name>TYSY_STRT1</name>
<organism>
    <name type="scientific">Streptococcus thermophilus (strain CNRZ 1066)</name>
    <dbReference type="NCBI Taxonomy" id="299768"/>
    <lineage>
        <taxon>Bacteria</taxon>
        <taxon>Bacillati</taxon>
        <taxon>Bacillota</taxon>
        <taxon>Bacilli</taxon>
        <taxon>Lactobacillales</taxon>
        <taxon>Streptococcaceae</taxon>
        <taxon>Streptococcus</taxon>
    </lineage>
</organism>
<dbReference type="EC" id="2.1.1.45" evidence="1"/>
<dbReference type="EMBL" id="CP000024">
    <property type="protein sequence ID" value="AAV62174.1"/>
    <property type="molecule type" value="Genomic_DNA"/>
</dbReference>
<dbReference type="RefSeq" id="WP_011226990.1">
    <property type="nucleotide sequence ID" value="NC_006449.1"/>
</dbReference>
<dbReference type="SMR" id="Q5M0S7"/>
<dbReference type="KEGG" id="stc:str0578"/>
<dbReference type="HOGENOM" id="CLU_021669_0_0_9"/>
<dbReference type="UniPathway" id="UPA00575"/>
<dbReference type="GO" id="GO:0005829">
    <property type="term" value="C:cytosol"/>
    <property type="evidence" value="ECO:0007669"/>
    <property type="project" value="TreeGrafter"/>
</dbReference>
<dbReference type="GO" id="GO:0004799">
    <property type="term" value="F:thymidylate synthase activity"/>
    <property type="evidence" value="ECO:0007669"/>
    <property type="project" value="UniProtKB-UniRule"/>
</dbReference>
<dbReference type="GO" id="GO:0006231">
    <property type="term" value="P:dTMP biosynthetic process"/>
    <property type="evidence" value="ECO:0007669"/>
    <property type="project" value="UniProtKB-UniRule"/>
</dbReference>
<dbReference type="GO" id="GO:0006235">
    <property type="term" value="P:dTTP biosynthetic process"/>
    <property type="evidence" value="ECO:0007669"/>
    <property type="project" value="UniProtKB-UniRule"/>
</dbReference>
<dbReference type="GO" id="GO:0032259">
    <property type="term" value="P:methylation"/>
    <property type="evidence" value="ECO:0007669"/>
    <property type="project" value="UniProtKB-KW"/>
</dbReference>
<dbReference type="CDD" id="cd00351">
    <property type="entry name" value="TS_Pyrimidine_HMase"/>
    <property type="match status" value="1"/>
</dbReference>
<dbReference type="Gene3D" id="3.30.572.10">
    <property type="entry name" value="Thymidylate synthase/dCMP hydroxymethylase domain"/>
    <property type="match status" value="1"/>
</dbReference>
<dbReference type="HAMAP" id="MF_00008">
    <property type="entry name" value="Thymidy_synth_bact"/>
    <property type="match status" value="1"/>
</dbReference>
<dbReference type="InterPro" id="IPR045097">
    <property type="entry name" value="Thymidate_synth/dCMP_Mease"/>
</dbReference>
<dbReference type="InterPro" id="IPR023451">
    <property type="entry name" value="Thymidate_synth/dCMP_Mease_dom"/>
</dbReference>
<dbReference type="InterPro" id="IPR036926">
    <property type="entry name" value="Thymidate_synth/dCMP_Mease_sf"/>
</dbReference>
<dbReference type="InterPro" id="IPR000398">
    <property type="entry name" value="Thymidylate_synthase"/>
</dbReference>
<dbReference type="InterPro" id="IPR020940">
    <property type="entry name" value="Thymidylate_synthase_AS"/>
</dbReference>
<dbReference type="NCBIfam" id="NF002495">
    <property type="entry name" value="PRK01827.1-1"/>
    <property type="match status" value="1"/>
</dbReference>
<dbReference type="PANTHER" id="PTHR11548">
    <property type="entry name" value="THYMIDYLATE SYNTHASE 1"/>
    <property type="match status" value="1"/>
</dbReference>
<dbReference type="PANTHER" id="PTHR11548:SF1">
    <property type="entry name" value="THYMIDYLATE SYNTHASE 1"/>
    <property type="match status" value="1"/>
</dbReference>
<dbReference type="Pfam" id="PF00303">
    <property type="entry name" value="Thymidylat_synt"/>
    <property type="match status" value="1"/>
</dbReference>
<dbReference type="PRINTS" id="PR00108">
    <property type="entry name" value="THYMDSNTHASE"/>
</dbReference>
<dbReference type="SUPFAM" id="SSF55831">
    <property type="entry name" value="Thymidylate synthase/dCMP hydroxymethylase"/>
    <property type="match status" value="1"/>
</dbReference>
<dbReference type="PROSITE" id="PS00091">
    <property type="entry name" value="THYMIDYLATE_SYNTHASE"/>
    <property type="match status" value="1"/>
</dbReference>